<reference key="1">
    <citation type="journal article" date="2002" name="Am. J. Bot.">
        <title>Monophyly of the Convolvulaceae and circumscription of their major lineages based on DNA sequences of multiple chloroplast loci.</title>
        <authorList>
            <person name="Stefanovic S."/>
            <person name="Krueger L."/>
            <person name="Olmstead R.G."/>
        </authorList>
        <dbReference type="AGRICOLA" id="IND23320510"/>
    </citation>
    <scope>NUCLEOTIDE SEQUENCE [GENOMIC DNA]</scope>
</reference>
<reference key="2">
    <citation type="journal article" date="2007" name="BMC Plant Biol.">
        <title>Complete DNA sequences of the plastid genomes of two parasitic flowering plant species, Cuscuta reflexa and Cuscuta gronovii.</title>
        <authorList>
            <person name="Funk H.T."/>
            <person name="Berg S."/>
            <person name="Krupinska K."/>
            <person name="Maier U.-G."/>
            <person name="Krause K."/>
        </authorList>
    </citation>
    <scope>NUCLEOTIDE SEQUENCE [LARGE SCALE GENOMIC DNA]</scope>
</reference>
<gene>
    <name evidence="1" type="primary">psbF</name>
</gene>
<accession>Q7H823</accession>
<accession>A7M913</accession>
<proteinExistence type="inferred from homology"/>
<geneLocation type="plastid"/>
<dbReference type="EMBL" id="AY100954">
    <property type="protein sequence ID" value="AAM53427.1"/>
    <property type="molecule type" value="Genomic_DNA"/>
</dbReference>
<dbReference type="EMBL" id="AM711639">
    <property type="protein sequence ID" value="CAM98341.1"/>
    <property type="molecule type" value="Genomic_DNA"/>
</dbReference>
<dbReference type="RefSeq" id="YP_001430055.1">
    <property type="nucleotide sequence ID" value="NC_009765.1"/>
</dbReference>
<dbReference type="SMR" id="Q7H823"/>
<dbReference type="GeneID" id="5536790"/>
<dbReference type="GO" id="GO:0009539">
    <property type="term" value="C:photosystem II reaction center"/>
    <property type="evidence" value="ECO:0007669"/>
    <property type="project" value="InterPro"/>
</dbReference>
<dbReference type="GO" id="GO:0042170">
    <property type="term" value="C:plastid membrane"/>
    <property type="evidence" value="ECO:0007669"/>
    <property type="project" value="UniProtKB-SubCell"/>
</dbReference>
<dbReference type="GO" id="GO:0042651">
    <property type="term" value="C:thylakoid membrane"/>
    <property type="evidence" value="ECO:0007669"/>
    <property type="project" value="UniProtKB-UniRule"/>
</dbReference>
<dbReference type="GO" id="GO:0009055">
    <property type="term" value="F:electron transfer activity"/>
    <property type="evidence" value="ECO:0007669"/>
    <property type="project" value="UniProtKB-UniRule"/>
</dbReference>
<dbReference type="GO" id="GO:0020037">
    <property type="term" value="F:heme binding"/>
    <property type="evidence" value="ECO:0007669"/>
    <property type="project" value="InterPro"/>
</dbReference>
<dbReference type="GO" id="GO:0005506">
    <property type="term" value="F:iron ion binding"/>
    <property type="evidence" value="ECO:0007669"/>
    <property type="project" value="UniProtKB-UniRule"/>
</dbReference>
<dbReference type="GO" id="GO:0009767">
    <property type="term" value="P:photosynthetic electron transport chain"/>
    <property type="evidence" value="ECO:0007669"/>
    <property type="project" value="InterPro"/>
</dbReference>
<dbReference type="HAMAP" id="MF_00643">
    <property type="entry name" value="PSII_PsbF"/>
    <property type="match status" value="1"/>
</dbReference>
<dbReference type="InterPro" id="IPR006241">
    <property type="entry name" value="PSII_cyt_b559_bsu"/>
</dbReference>
<dbReference type="InterPro" id="IPR006216">
    <property type="entry name" value="PSII_cyt_b559_CS"/>
</dbReference>
<dbReference type="InterPro" id="IPR013081">
    <property type="entry name" value="PSII_cyt_b559_N"/>
</dbReference>
<dbReference type="NCBIfam" id="TIGR01333">
    <property type="entry name" value="cyt_b559_beta"/>
    <property type="match status" value="1"/>
</dbReference>
<dbReference type="Pfam" id="PF00283">
    <property type="entry name" value="Cytochrom_B559"/>
    <property type="match status" value="1"/>
</dbReference>
<dbReference type="PIRSF" id="PIRSF000037">
    <property type="entry name" value="PsbF"/>
    <property type="match status" value="1"/>
</dbReference>
<dbReference type="SUPFAM" id="SSF161045">
    <property type="entry name" value="Cytochrome b559 subunits"/>
    <property type="match status" value="1"/>
</dbReference>
<dbReference type="PROSITE" id="PS00537">
    <property type="entry name" value="CYTOCHROME_B559"/>
    <property type="match status" value="1"/>
</dbReference>
<sequence length="39" mass="4498">MTIDRTYPIFTVRWLAVHGLAIPTVFFLGSISAMQFIQR</sequence>
<evidence type="ECO:0000255" key="1">
    <source>
        <dbReference type="HAMAP-Rule" id="MF_00643"/>
    </source>
</evidence>
<evidence type="ECO:0000305" key="2"/>
<protein>
    <recommendedName>
        <fullName evidence="1">Cytochrome b559 subunit beta</fullName>
    </recommendedName>
    <alternativeName>
        <fullName evidence="1">PSII reaction center subunit VI</fullName>
    </alternativeName>
</protein>
<comment type="function">
    <text evidence="1">This b-type cytochrome is tightly associated with the reaction center of photosystem II (PSII). PSII is a light-driven water:plastoquinone oxidoreductase that uses light energy to abstract electrons from H(2)O, generating O(2) and a proton gradient subsequently used for ATP formation. It consists of a core antenna complex that captures photons, and an electron transfer chain that converts photonic excitation into a charge separation.</text>
</comment>
<comment type="cofactor">
    <cofactor evidence="1">
        <name>heme b</name>
        <dbReference type="ChEBI" id="CHEBI:60344"/>
    </cofactor>
    <text evidence="1">With its partner (PsbE) binds heme. PSII binds additional chlorophylls, carotenoids and specific lipids.</text>
</comment>
<comment type="subunit">
    <text evidence="1">Heterodimer of an alpha subunit and a beta subunit. PSII is composed of 1 copy each of membrane proteins PsbA, PsbB, PsbC, PsbD, PsbE, PsbF, PsbH, PsbI, PsbJ, PsbK, PsbL, PsbM, PsbT, PsbX, PsbY, PsbZ, Psb30/Ycf12, at least 3 peripheral proteins of the oxygen-evolving complex and a large number of cofactors. It forms dimeric complexes.</text>
</comment>
<comment type="subcellular location">
    <subcellularLocation>
        <location evidence="2">Plastid membrane</location>
        <topology evidence="1">Single-pass membrane protein</topology>
    </subcellularLocation>
</comment>
<comment type="similarity">
    <text evidence="1">Belongs to the PsbE/PsbF family.</text>
</comment>
<comment type="caution">
    <text evidence="2">Young tissue from this organism is photosynthetic and contains some thylakoids, although the photosynthetic activity does not exceed the light compensation point.</text>
</comment>
<feature type="chain" id="PRO_0000200381" description="Cytochrome b559 subunit beta">
    <location>
        <begin position="1"/>
        <end position="39"/>
    </location>
</feature>
<feature type="transmembrane region" description="Helical" evidence="1">
    <location>
        <begin position="14"/>
        <end position="30"/>
    </location>
</feature>
<feature type="binding site" description="axial binding residue" evidence="1">
    <location>
        <position position="18"/>
    </location>
    <ligand>
        <name>heme</name>
        <dbReference type="ChEBI" id="CHEBI:30413"/>
        <note>ligand shared with alpha subunit</note>
    </ligand>
    <ligandPart>
        <name>Fe</name>
        <dbReference type="ChEBI" id="CHEBI:18248"/>
    </ligandPart>
</feature>
<name>PSBF_CUSGR</name>
<organism>
    <name type="scientific">Cuscuta gronovii</name>
    <name type="common">Common dodder</name>
    <name type="synonym">Epithymum gronovii</name>
    <dbReference type="NCBI Taxonomy" id="35886"/>
    <lineage>
        <taxon>Eukaryota</taxon>
        <taxon>Viridiplantae</taxon>
        <taxon>Streptophyta</taxon>
        <taxon>Embryophyta</taxon>
        <taxon>Tracheophyta</taxon>
        <taxon>Spermatophyta</taxon>
        <taxon>Magnoliopsida</taxon>
        <taxon>eudicotyledons</taxon>
        <taxon>Gunneridae</taxon>
        <taxon>Pentapetalae</taxon>
        <taxon>asterids</taxon>
        <taxon>lamiids</taxon>
        <taxon>Solanales</taxon>
        <taxon>Convolvulaceae</taxon>
        <taxon>Cuscuteae</taxon>
        <taxon>Cuscuta</taxon>
        <taxon>Cuscuta subgen. Grammica</taxon>
        <taxon>Cuscuta sect. Oxycarpae</taxon>
    </lineage>
</organism>
<keyword id="KW-0249">Electron transport</keyword>
<keyword id="KW-0349">Heme</keyword>
<keyword id="KW-0408">Iron</keyword>
<keyword id="KW-0472">Membrane</keyword>
<keyword id="KW-0479">Metal-binding</keyword>
<keyword id="KW-0602">Photosynthesis</keyword>
<keyword id="KW-0604">Photosystem II</keyword>
<keyword id="KW-0934">Plastid</keyword>
<keyword id="KW-0812">Transmembrane</keyword>
<keyword id="KW-1133">Transmembrane helix</keyword>
<keyword id="KW-0813">Transport</keyword>